<reference key="1">
    <citation type="submission" date="2009-01" db="EMBL/GenBank/DDBJ databases">
        <title>Complete sequence of Anaeromyxobacter dehalogenans 2CP-1.</title>
        <authorList>
            <person name="Lucas S."/>
            <person name="Copeland A."/>
            <person name="Lapidus A."/>
            <person name="Glavina del Rio T."/>
            <person name="Dalin E."/>
            <person name="Tice H."/>
            <person name="Bruce D."/>
            <person name="Goodwin L."/>
            <person name="Pitluck S."/>
            <person name="Saunders E."/>
            <person name="Brettin T."/>
            <person name="Detter J.C."/>
            <person name="Han C."/>
            <person name="Larimer F."/>
            <person name="Land M."/>
            <person name="Hauser L."/>
            <person name="Kyrpides N."/>
            <person name="Ovchinnikova G."/>
            <person name="Beliaev A.S."/>
            <person name="Richardson P."/>
        </authorList>
    </citation>
    <scope>NUCLEOTIDE SEQUENCE [LARGE SCALE GENOMIC DNA]</scope>
    <source>
        <strain>2CP-1 / ATCC BAA-258</strain>
    </source>
</reference>
<proteinExistence type="inferred from homology"/>
<evidence type="ECO:0000255" key="1">
    <source>
        <dbReference type="HAMAP-Rule" id="MF_00113"/>
    </source>
</evidence>
<dbReference type="EC" id="2.4.99.17" evidence="1"/>
<dbReference type="EMBL" id="CP001359">
    <property type="protein sequence ID" value="ACL64750.1"/>
    <property type="molecule type" value="Genomic_DNA"/>
</dbReference>
<dbReference type="RefSeq" id="WP_012632707.1">
    <property type="nucleotide sequence ID" value="NC_011891.1"/>
</dbReference>
<dbReference type="SMR" id="B8JH48"/>
<dbReference type="KEGG" id="acp:A2cp1_1406"/>
<dbReference type="HOGENOM" id="CLU_039110_1_0_7"/>
<dbReference type="UniPathway" id="UPA00392"/>
<dbReference type="Proteomes" id="UP000007089">
    <property type="component" value="Chromosome"/>
</dbReference>
<dbReference type="GO" id="GO:0005737">
    <property type="term" value="C:cytoplasm"/>
    <property type="evidence" value="ECO:0007669"/>
    <property type="project" value="UniProtKB-SubCell"/>
</dbReference>
<dbReference type="GO" id="GO:0051075">
    <property type="term" value="F:S-adenosylmethionine:tRNA ribosyltransferase-isomerase activity"/>
    <property type="evidence" value="ECO:0007669"/>
    <property type="project" value="UniProtKB-EC"/>
</dbReference>
<dbReference type="GO" id="GO:0008616">
    <property type="term" value="P:queuosine biosynthetic process"/>
    <property type="evidence" value="ECO:0007669"/>
    <property type="project" value="UniProtKB-UniRule"/>
</dbReference>
<dbReference type="GO" id="GO:0002099">
    <property type="term" value="P:tRNA wobble guanine modification"/>
    <property type="evidence" value="ECO:0007669"/>
    <property type="project" value="TreeGrafter"/>
</dbReference>
<dbReference type="Gene3D" id="2.40.10.240">
    <property type="entry name" value="QueA-like"/>
    <property type="match status" value="1"/>
</dbReference>
<dbReference type="Gene3D" id="3.40.1780.10">
    <property type="entry name" value="QueA-like"/>
    <property type="match status" value="1"/>
</dbReference>
<dbReference type="HAMAP" id="MF_00113">
    <property type="entry name" value="QueA"/>
    <property type="match status" value="1"/>
</dbReference>
<dbReference type="InterPro" id="IPR003699">
    <property type="entry name" value="QueA"/>
</dbReference>
<dbReference type="InterPro" id="IPR042118">
    <property type="entry name" value="QueA_dom1"/>
</dbReference>
<dbReference type="InterPro" id="IPR042119">
    <property type="entry name" value="QueA_dom2"/>
</dbReference>
<dbReference type="InterPro" id="IPR036100">
    <property type="entry name" value="QueA_sf"/>
</dbReference>
<dbReference type="NCBIfam" id="NF001140">
    <property type="entry name" value="PRK00147.1"/>
    <property type="match status" value="1"/>
</dbReference>
<dbReference type="NCBIfam" id="TIGR00113">
    <property type="entry name" value="queA"/>
    <property type="match status" value="1"/>
</dbReference>
<dbReference type="PANTHER" id="PTHR30307">
    <property type="entry name" value="S-ADENOSYLMETHIONINE:TRNA RIBOSYLTRANSFERASE-ISOMERASE"/>
    <property type="match status" value="1"/>
</dbReference>
<dbReference type="PANTHER" id="PTHR30307:SF0">
    <property type="entry name" value="S-ADENOSYLMETHIONINE:TRNA RIBOSYLTRANSFERASE-ISOMERASE"/>
    <property type="match status" value="1"/>
</dbReference>
<dbReference type="Pfam" id="PF02547">
    <property type="entry name" value="Queuosine_synth"/>
    <property type="match status" value="1"/>
</dbReference>
<dbReference type="SUPFAM" id="SSF111337">
    <property type="entry name" value="QueA-like"/>
    <property type="match status" value="1"/>
</dbReference>
<protein>
    <recommendedName>
        <fullName evidence="1">S-adenosylmethionine:tRNA ribosyltransferase-isomerase</fullName>
        <ecNumber evidence="1">2.4.99.17</ecNumber>
    </recommendedName>
    <alternativeName>
        <fullName evidence="1">Queuosine biosynthesis protein QueA</fullName>
    </alternativeName>
</protein>
<sequence length="345" mass="37183">MRLSDFDFALPEGLVAQAPVTPRDASRLMVLAPEEGSPAHRGFADLPELLAPGDLLVFNDTRVIPARLLGHKASGGKVELLLCEPLEGGLGRRWRAMGQASKPIREGAVLTFDGLEARVDDVEGEGFYRVTLDRQGPELEAALGRAGRIPLPPYIRRAPDAEDAARYQTIWARAPGSAAAPTAGLHFTEPLLARLAARGIRRTAVTLHVGPGTFLPIRGDDLDLHRMHGERYEVSPAAAAELAATRARGGRIVAVGTTSVRTLESAWRDGAVAAGPGRTELFIRPGHPFHAVDAMVTNFHLPRSTLLVLVCAFGGQGRVLAAYREAVARGYRFFSYGDAMLLLRR</sequence>
<feature type="chain" id="PRO_1000119138" description="S-adenosylmethionine:tRNA ribosyltransferase-isomerase">
    <location>
        <begin position="1"/>
        <end position="345"/>
    </location>
</feature>
<gene>
    <name evidence="1" type="primary">queA</name>
    <name type="ordered locus">A2cp1_1406</name>
</gene>
<name>QUEA_ANAD2</name>
<organism>
    <name type="scientific">Anaeromyxobacter dehalogenans (strain 2CP-1 / ATCC BAA-258)</name>
    <dbReference type="NCBI Taxonomy" id="455488"/>
    <lineage>
        <taxon>Bacteria</taxon>
        <taxon>Pseudomonadati</taxon>
        <taxon>Myxococcota</taxon>
        <taxon>Myxococcia</taxon>
        <taxon>Myxococcales</taxon>
        <taxon>Cystobacterineae</taxon>
        <taxon>Anaeromyxobacteraceae</taxon>
        <taxon>Anaeromyxobacter</taxon>
    </lineage>
</organism>
<comment type="function">
    <text evidence="1">Transfers and isomerizes the ribose moiety from AdoMet to the 7-aminomethyl group of 7-deazaguanine (preQ1-tRNA) to give epoxyqueuosine (oQ-tRNA).</text>
</comment>
<comment type="catalytic activity">
    <reaction evidence="1">
        <text>7-aminomethyl-7-carbaguanosine(34) in tRNA + S-adenosyl-L-methionine = epoxyqueuosine(34) in tRNA + adenine + L-methionine + 2 H(+)</text>
        <dbReference type="Rhea" id="RHEA:32155"/>
        <dbReference type="Rhea" id="RHEA-COMP:10342"/>
        <dbReference type="Rhea" id="RHEA-COMP:18582"/>
        <dbReference type="ChEBI" id="CHEBI:15378"/>
        <dbReference type="ChEBI" id="CHEBI:16708"/>
        <dbReference type="ChEBI" id="CHEBI:57844"/>
        <dbReference type="ChEBI" id="CHEBI:59789"/>
        <dbReference type="ChEBI" id="CHEBI:82833"/>
        <dbReference type="ChEBI" id="CHEBI:194443"/>
        <dbReference type="EC" id="2.4.99.17"/>
    </reaction>
</comment>
<comment type="pathway">
    <text evidence="1">tRNA modification; tRNA-queuosine biosynthesis.</text>
</comment>
<comment type="subunit">
    <text evidence="1">Monomer.</text>
</comment>
<comment type="subcellular location">
    <subcellularLocation>
        <location evidence="1">Cytoplasm</location>
    </subcellularLocation>
</comment>
<comment type="similarity">
    <text evidence="1">Belongs to the QueA family.</text>
</comment>
<accession>B8JH48</accession>
<keyword id="KW-0963">Cytoplasm</keyword>
<keyword id="KW-0671">Queuosine biosynthesis</keyword>
<keyword id="KW-0949">S-adenosyl-L-methionine</keyword>
<keyword id="KW-0808">Transferase</keyword>